<comment type="function">
    <text evidence="1">Catalyzes the ATP-dependent amidation of deamido-NAD to form NAD. Uses ammonia as a nitrogen source.</text>
</comment>
<comment type="catalytic activity">
    <reaction evidence="1">
        <text>deamido-NAD(+) + NH4(+) + ATP = AMP + diphosphate + NAD(+) + H(+)</text>
        <dbReference type="Rhea" id="RHEA:21188"/>
        <dbReference type="ChEBI" id="CHEBI:15378"/>
        <dbReference type="ChEBI" id="CHEBI:28938"/>
        <dbReference type="ChEBI" id="CHEBI:30616"/>
        <dbReference type="ChEBI" id="CHEBI:33019"/>
        <dbReference type="ChEBI" id="CHEBI:57540"/>
        <dbReference type="ChEBI" id="CHEBI:58437"/>
        <dbReference type="ChEBI" id="CHEBI:456215"/>
        <dbReference type="EC" id="6.3.1.5"/>
    </reaction>
</comment>
<comment type="pathway">
    <text evidence="1">Cofactor biosynthesis; NAD(+) biosynthesis; NAD(+) from deamido-NAD(+) (ammonia route): step 1/1.</text>
</comment>
<comment type="subunit">
    <text evidence="1">Homodimer.</text>
</comment>
<comment type="similarity">
    <text evidence="1">Belongs to the NAD synthetase family.</text>
</comment>
<reference key="1">
    <citation type="journal article" date="2007" name="J. Bacteriol.">
        <title>The complete genome sequence of Bacillus thuringiensis Al Hakam.</title>
        <authorList>
            <person name="Challacombe J.F."/>
            <person name="Altherr M.R."/>
            <person name="Xie G."/>
            <person name="Bhotika S.S."/>
            <person name="Brown N."/>
            <person name="Bruce D."/>
            <person name="Campbell C.S."/>
            <person name="Campbell M.L."/>
            <person name="Chen J."/>
            <person name="Chertkov O."/>
            <person name="Cleland C."/>
            <person name="Dimitrijevic M."/>
            <person name="Doggett N.A."/>
            <person name="Fawcett J.J."/>
            <person name="Glavina T."/>
            <person name="Goodwin L.A."/>
            <person name="Green L.D."/>
            <person name="Han C.S."/>
            <person name="Hill K.K."/>
            <person name="Hitchcock P."/>
            <person name="Jackson P.J."/>
            <person name="Keim P."/>
            <person name="Kewalramani A.R."/>
            <person name="Longmire J."/>
            <person name="Lucas S."/>
            <person name="Malfatti S."/>
            <person name="Martinez D."/>
            <person name="McMurry K."/>
            <person name="Meincke L.J."/>
            <person name="Misra M."/>
            <person name="Moseman B.L."/>
            <person name="Mundt M."/>
            <person name="Munk A.C."/>
            <person name="Okinaka R.T."/>
            <person name="Parson-Quintana B."/>
            <person name="Reilly L.P."/>
            <person name="Richardson P."/>
            <person name="Robinson D.L."/>
            <person name="Saunders E."/>
            <person name="Tapia R."/>
            <person name="Tesmer J.G."/>
            <person name="Thayer N."/>
            <person name="Thompson L.S."/>
            <person name="Tice H."/>
            <person name="Ticknor L.O."/>
            <person name="Wills P.L."/>
            <person name="Gilna P."/>
            <person name="Brettin T.S."/>
        </authorList>
    </citation>
    <scope>NUCLEOTIDE SEQUENCE [LARGE SCALE GENOMIC DNA]</scope>
    <source>
        <strain>Al Hakam</strain>
    </source>
</reference>
<protein>
    <recommendedName>
        <fullName evidence="1">NH(3)-dependent NAD(+) synthetase</fullName>
        <ecNumber evidence="1">6.3.1.5</ecNumber>
    </recommendedName>
</protein>
<accession>A0RCZ8</accession>
<proteinExistence type="inferred from homology"/>
<name>NADE_BACAH</name>
<gene>
    <name evidence="1" type="primary">nadE</name>
    <name type="ordered locus">BALH_1767</name>
</gene>
<evidence type="ECO:0000255" key="1">
    <source>
        <dbReference type="HAMAP-Rule" id="MF_00193"/>
    </source>
</evidence>
<keyword id="KW-0067">ATP-binding</keyword>
<keyword id="KW-0436">Ligase</keyword>
<keyword id="KW-0460">Magnesium</keyword>
<keyword id="KW-0479">Metal-binding</keyword>
<keyword id="KW-0520">NAD</keyword>
<keyword id="KW-0547">Nucleotide-binding</keyword>
<feature type="chain" id="PRO_1000077532" description="NH(3)-dependent NAD(+) synthetase">
    <location>
        <begin position="1"/>
        <end position="272"/>
    </location>
</feature>
<feature type="binding site" evidence="1">
    <location>
        <begin position="45"/>
        <end position="52"/>
    </location>
    <ligand>
        <name>ATP</name>
        <dbReference type="ChEBI" id="CHEBI:30616"/>
    </ligand>
</feature>
<feature type="binding site" evidence="1">
    <location>
        <position position="51"/>
    </location>
    <ligand>
        <name>Mg(2+)</name>
        <dbReference type="ChEBI" id="CHEBI:18420"/>
    </ligand>
</feature>
<feature type="binding site" evidence="1">
    <location>
        <position position="138"/>
    </location>
    <ligand>
        <name>deamido-NAD(+)</name>
        <dbReference type="ChEBI" id="CHEBI:58437"/>
    </ligand>
</feature>
<feature type="binding site" evidence="1">
    <location>
        <position position="158"/>
    </location>
    <ligand>
        <name>ATP</name>
        <dbReference type="ChEBI" id="CHEBI:30616"/>
    </ligand>
</feature>
<feature type="binding site" evidence="1">
    <location>
        <position position="163"/>
    </location>
    <ligand>
        <name>Mg(2+)</name>
        <dbReference type="ChEBI" id="CHEBI:18420"/>
    </ligand>
</feature>
<feature type="binding site" evidence="1">
    <location>
        <position position="171"/>
    </location>
    <ligand>
        <name>deamido-NAD(+)</name>
        <dbReference type="ChEBI" id="CHEBI:58437"/>
    </ligand>
</feature>
<feature type="binding site" evidence="1">
    <location>
        <position position="178"/>
    </location>
    <ligand>
        <name>deamido-NAD(+)</name>
        <dbReference type="ChEBI" id="CHEBI:58437"/>
    </ligand>
</feature>
<feature type="binding site" evidence="1">
    <location>
        <position position="187"/>
    </location>
    <ligand>
        <name>ATP</name>
        <dbReference type="ChEBI" id="CHEBI:30616"/>
    </ligand>
</feature>
<feature type="binding site" evidence="1">
    <location>
        <position position="209"/>
    </location>
    <ligand>
        <name>ATP</name>
        <dbReference type="ChEBI" id="CHEBI:30616"/>
    </ligand>
</feature>
<feature type="binding site" evidence="1">
    <location>
        <begin position="258"/>
        <end position="259"/>
    </location>
    <ligand>
        <name>deamido-NAD(+)</name>
        <dbReference type="ChEBI" id="CHEBI:58437"/>
    </ligand>
</feature>
<organism>
    <name type="scientific">Bacillus thuringiensis (strain Al Hakam)</name>
    <dbReference type="NCBI Taxonomy" id="412694"/>
    <lineage>
        <taxon>Bacteria</taxon>
        <taxon>Bacillati</taxon>
        <taxon>Bacillota</taxon>
        <taxon>Bacilli</taxon>
        <taxon>Bacillales</taxon>
        <taxon>Bacillaceae</taxon>
        <taxon>Bacillus</taxon>
        <taxon>Bacillus cereus group</taxon>
    </lineage>
</organism>
<sequence>MTLQEQIMKALHVQPVIDPKAEIRKRVDFLKDYVKKTGAKGFVLGISGGQDSTLAGRLAQLAVEEIRNEGGNATFIAVRLPYKVQKDEDDAQLALQFIQADQSVAFDIASTVDAFSNQYENLLDESLTDFNKGNVKARIRMVTQYAIGGQKGLLVIGTDHAAEAVTGFFTKFGDGGADLLPLTGLTKRQGRALLQELGADERLYLKMPTADLLDEKPGQADETELGITYDQLDDYLEGKTVPADVAEKIEKRYTVSEHKRQVPASMFDDWWK</sequence>
<dbReference type="EC" id="6.3.1.5" evidence="1"/>
<dbReference type="EMBL" id="CP000485">
    <property type="protein sequence ID" value="ABK85091.1"/>
    <property type="molecule type" value="Genomic_DNA"/>
</dbReference>
<dbReference type="RefSeq" id="WP_000174879.1">
    <property type="nucleotide sequence ID" value="NC_008600.1"/>
</dbReference>
<dbReference type="SMR" id="A0RCZ8"/>
<dbReference type="GeneID" id="75085226"/>
<dbReference type="KEGG" id="btl:BALH_1767"/>
<dbReference type="HOGENOM" id="CLU_059327_3_0_9"/>
<dbReference type="UniPathway" id="UPA00253">
    <property type="reaction ID" value="UER00333"/>
</dbReference>
<dbReference type="GO" id="GO:0005737">
    <property type="term" value="C:cytoplasm"/>
    <property type="evidence" value="ECO:0007669"/>
    <property type="project" value="InterPro"/>
</dbReference>
<dbReference type="GO" id="GO:0005524">
    <property type="term" value="F:ATP binding"/>
    <property type="evidence" value="ECO:0007669"/>
    <property type="project" value="UniProtKB-UniRule"/>
</dbReference>
<dbReference type="GO" id="GO:0004359">
    <property type="term" value="F:glutaminase activity"/>
    <property type="evidence" value="ECO:0007669"/>
    <property type="project" value="InterPro"/>
</dbReference>
<dbReference type="GO" id="GO:0046872">
    <property type="term" value="F:metal ion binding"/>
    <property type="evidence" value="ECO:0007669"/>
    <property type="project" value="UniProtKB-KW"/>
</dbReference>
<dbReference type="GO" id="GO:0003952">
    <property type="term" value="F:NAD+ synthase (glutamine-hydrolyzing) activity"/>
    <property type="evidence" value="ECO:0007669"/>
    <property type="project" value="InterPro"/>
</dbReference>
<dbReference type="GO" id="GO:0008795">
    <property type="term" value="F:NAD+ synthase activity"/>
    <property type="evidence" value="ECO:0007669"/>
    <property type="project" value="UniProtKB-UniRule"/>
</dbReference>
<dbReference type="GO" id="GO:0009435">
    <property type="term" value="P:NAD biosynthetic process"/>
    <property type="evidence" value="ECO:0007669"/>
    <property type="project" value="UniProtKB-UniRule"/>
</dbReference>
<dbReference type="CDD" id="cd00553">
    <property type="entry name" value="NAD_synthase"/>
    <property type="match status" value="1"/>
</dbReference>
<dbReference type="FunFam" id="3.40.50.620:FF:000015">
    <property type="entry name" value="NH(3)-dependent NAD(+) synthetase"/>
    <property type="match status" value="1"/>
</dbReference>
<dbReference type="Gene3D" id="3.40.50.620">
    <property type="entry name" value="HUPs"/>
    <property type="match status" value="1"/>
</dbReference>
<dbReference type="HAMAP" id="MF_00193">
    <property type="entry name" value="NadE_ammonia_dep"/>
    <property type="match status" value="1"/>
</dbReference>
<dbReference type="InterPro" id="IPR022310">
    <property type="entry name" value="NAD/GMP_synthase"/>
</dbReference>
<dbReference type="InterPro" id="IPR003694">
    <property type="entry name" value="NAD_synthase"/>
</dbReference>
<dbReference type="InterPro" id="IPR022926">
    <property type="entry name" value="NH(3)-dep_NAD(+)_synth"/>
</dbReference>
<dbReference type="InterPro" id="IPR014729">
    <property type="entry name" value="Rossmann-like_a/b/a_fold"/>
</dbReference>
<dbReference type="NCBIfam" id="TIGR00552">
    <property type="entry name" value="nadE"/>
    <property type="match status" value="1"/>
</dbReference>
<dbReference type="NCBIfam" id="NF001979">
    <property type="entry name" value="PRK00768.1"/>
    <property type="match status" value="1"/>
</dbReference>
<dbReference type="PANTHER" id="PTHR23090">
    <property type="entry name" value="NH 3 /GLUTAMINE-DEPENDENT NAD + SYNTHETASE"/>
    <property type="match status" value="1"/>
</dbReference>
<dbReference type="PANTHER" id="PTHR23090:SF7">
    <property type="entry name" value="NH(3)-DEPENDENT NAD(+) SYNTHETASE"/>
    <property type="match status" value="1"/>
</dbReference>
<dbReference type="Pfam" id="PF02540">
    <property type="entry name" value="NAD_synthase"/>
    <property type="match status" value="1"/>
</dbReference>
<dbReference type="SUPFAM" id="SSF52402">
    <property type="entry name" value="Adenine nucleotide alpha hydrolases-like"/>
    <property type="match status" value="1"/>
</dbReference>